<evidence type="ECO:0000255" key="1">
    <source>
        <dbReference type="HAMAP-Rule" id="MF_00632"/>
    </source>
</evidence>
<protein>
    <recommendedName>
        <fullName evidence="1">Nucleotide-binding protein Noca_0564</fullName>
    </recommendedName>
</protein>
<keyword id="KW-0547">Nucleotide-binding</keyword>
<keyword id="KW-1185">Reference proteome</keyword>
<name>Y564_NOCSJ</name>
<sequence>MADSSFDIVSKIDRQEVDNALGQTAREIATRFDFKGTGASIEWQGEHAIEISASADDRASAVLDVFKTKLVKRDVSLKVLDASEPRQSGQQSKIAIALKEGISSEDAKKISKLIRDEGPKGVKAQIQGDELRVSSKKRDDLQAVIALVKQQDYDFAVQFTNYR</sequence>
<accession>A1SE71</accession>
<reference key="1">
    <citation type="submission" date="2006-12" db="EMBL/GenBank/DDBJ databases">
        <title>Complete sequence of chromosome 1 of Nocardioides sp. JS614.</title>
        <authorList>
            <person name="Copeland A."/>
            <person name="Lucas S."/>
            <person name="Lapidus A."/>
            <person name="Barry K."/>
            <person name="Detter J.C."/>
            <person name="Glavina del Rio T."/>
            <person name="Hammon N."/>
            <person name="Israni S."/>
            <person name="Dalin E."/>
            <person name="Tice H."/>
            <person name="Pitluck S."/>
            <person name="Thompson L.S."/>
            <person name="Brettin T."/>
            <person name="Bruce D."/>
            <person name="Han C."/>
            <person name="Tapia R."/>
            <person name="Schmutz J."/>
            <person name="Larimer F."/>
            <person name="Land M."/>
            <person name="Hauser L."/>
            <person name="Kyrpides N."/>
            <person name="Kim E."/>
            <person name="Mattes T."/>
            <person name="Gossett J."/>
            <person name="Richardson P."/>
        </authorList>
    </citation>
    <scope>NUCLEOTIDE SEQUENCE [LARGE SCALE GENOMIC DNA]</scope>
    <source>
        <strain>ATCC BAA-499 / JS614</strain>
    </source>
</reference>
<feature type="chain" id="PRO_1000051746" description="Nucleotide-binding protein Noca_0564">
    <location>
        <begin position="1"/>
        <end position="163"/>
    </location>
</feature>
<dbReference type="EMBL" id="CP000509">
    <property type="protein sequence ID" value="ABL80106.1"/>
    <property type="molecule type" value="Genomic_DNA"/>
</dbReference>
<dbReference type="RefSeq" id="WP_011754056.1">
    <property type="nucleotide sequence ID" value="NC_008699.1"/>
</dbReference>
<dbReference type="SMR" id="A1SE71"/>
<dbReference type="STRING" id="196162.Noca_0564"/>
<dbReference type="KEGG" id="nca:Noca_0564"/>
<dbReference type="eggNOG" id="COG1666">
    <property type="taxonomic scope" value="Bacteria"/>
</dbReference>
<dbReference type="HOGENOM" id="CLU_099839_0_0_11"/>
<dbReference type="OrthoDB" id="9801447at2"/>
<dbReference type="Proteomes" id="UP000000640">
    <property type="component" value="Chromosome"/>
</dbReference>
<dbReference type="GO" id="GO:0005829">
    <property type="term" value="C:cytosol"/>
    <property type="evidence" value="ECO:0007669"/>
    <property type="project" value="TreeGrafter"/>
</dbReference>
<dbReference type="GO" id="GO:0000166">
    <property type="term" value="F:nucleotide binding"/>
    <property type="evidence" value="ECO:0007669"/>
    <property type="project" value="TreeGrafter"/>
</dbReference>
<dbReference type="CDD" id="cd11740">
    <property type="entry name" value="YajQ_like"/>
    <property type="match status" value="1"/>
</dbReference>
<dbReference type="FunFam" id="3.30.70.860:FF:000004">
    <property type="entry name" value="UPF0234 protein AWC22_11905"/>
    <property type="match status" value="1"/>
</dbReference>
<dbReference type="Gene3D" id="3.30.70.860">
    <property type="match status" value="1"/>
</dbReference>
<dbReference type="Gene3D" id="3.30.70.990">
    <property type="entry name" value="YajQ-like, domain 2"/>
    <property type="match status" value="1"/>
</dbReference>
<dbReference type="HAMAP" id="MF_00632">
    <property type="entry name" value="YajQ"/>
    <property type="match status" value="1"/>
</dbReference>
<dbReference type="InterPro" id="IPR007551">
    <property type="entry name" value="DUF520"/>
</dbReference>
<dbReference type="InterPro" id="IPR035571">
    <property type="entry name" value="UPF0234-like_C"/>
</dbReference>
<dbReference type="InterPro" id="IPR035570">
    <property type="entry name" value="UPF0234_N"/>
</dbReference>
<dbReference type="InterPro" id="IPR036183">
    <property type="entry name" value="YajQ-like_sf"/>
</dbReference>
<dbReference type="NCBIfam" id="NF003819">
    <property type="entry name" value="PRK05412.1"/>
    <property type="match status" value="1"/>
</dbReference>
<dbReference type="PANTHER" id="PTHR30476">
    <property type="entry name" value="UPF0234 PROTEIN YAJQ"/>
    <property type="match status" value="1"/>
</dbReference>
<dbReference type="PANTHER" id="PTHR30476:SF0">
    <property type="entry name" value="UPF0234 PROTEIN YAJQ"/>
    <property type="match status" value="1"/>
</dbReference>
<dbReference type="Pfam" id="PF04461">
    <property type="entry name" value="DUF520"/>
    <property type="match status" value="1"/>
</dbReference>
<dbReference type="SUPFAM" id="SSF89963">
    <property type="entry name" value="YajQ-like"/>
    <property type="match status" value="2"/>
</dbReference>
<organism>
    <name type="scientific">Nocardioides sp. (strain ATCC BAA-499 / JS614)</name>
    <dbReference type="NCBI Taxonomy" id="196162"/>
    <lineage>
        <taxon>Bacteria</taxon>
        <taxon>Bacillati</taxon>
        <taxon>Actinomycetota</taxon>
        <taxon>Actinomycetes</taxon>
        <taxon>Propionibacteriales</taxon>
        <taxon>Nocardioidaceae</taxon>
        <taxon>Nocardioides</taxon>
    </lineage>
</organism>
<gene>
    <name type="ordered locus">Noca_0564</name>
</gene>
<proteinExistence type="inferred from homology"/>
<comment type="function">
    <text evidence="1">Nucleotide-binding protein.</text>
</comment>
<comment type="similarity">
    <text evidence="1">Belongs to the YajQ family.</text>
</comment>